<proteinExistence type="inferred from homology"/>
<feature type="chain" id="PRO_0000176809" description="Small ribosomal subunit protein bS6">
    <location>
        <begin position="1"/>
        <end position="95"/>
    </location>
</feature>
<accession>Q6YRK5</accession>
<evidence type="ECO:0000255" key="1">
    <source>
        <dbReference type="HAMAP-Rule" id="MF_00360"/>
    </source>
</evidence>
<evidence type="ECO:0000305" key="2"/>
<sequence length="95" mass="11377">MKKYEIMYILRPNLDSKDVKKINDTLQNVFLQAPNQILEQNEIGLKDLAYLIDNHKKGYYNWLMVKADNDAVLEFNRIVKITEEIIRFIFIKDKE</sequence>
<dbReference type="EMBL" id="AP006628">
    <property type="protein sequence ID" value="BAD04094.1"/>
    <property type="status" value="ALT_INIT"/>
    <property type="molecule type" value="Genomic_DNA"/>
</dbReference>
<dbReference type="SMR" id="Q6YRK5"/>
<dbReference type="STRING" id="262768.PAM_009"/>
<dbReference type="KEGG" id="poy:PAM_009"/>
<dbReference type="eggNOG" id="COG0360">
    <property type="taxonomic scope" value="Bacteria"/>
</dbReference>
<dbReference type="HOGENOM" id="CLU_113441_5_3_14"/>
<dbReference type="BioCyc" id="OYEL262768:G1G26-14-MONOMER"/>
<dbReference type="Proteomes" id="UP000002523">
    <property type="component" value="Chromosome"/>
</dbReference>
<dbReference type="GO" id="GO:0005737">
    <property type="term" value="C:cytoplasm"/>
    <property type="evidence" value="ECO:0007669"/>
    <property type="project" value="UniProtKB-ARBA"/>
</dbReference>
<dbReference type="GO" id="GO:1990904">
    <property type="term" value="C:ribonucleoprotein complex"/>
    <property type="evidence" value="ECO:0007669"/>
    <property type="project" value="UniProtKB-KW"/>
</dbReference>
<dbReference type="GO" id="GO:0005840">
    <property type="term" value="C:ribosome"/>
    <property type="evidence" value="ECO:0007669"/>
    <property type="project" value="UniProtKB-KW"/>
</dbReference>
<dbReference type="GO" id="GO:0070181">
    <property type="term" value="F:small ribosomal subunit rRNA binding"/>
    <property type="evidence" value="ECO:0007669"/>
    <property type="project" value="TreeGrafter"/>
</dbReference>
<dbReference type="GO" id="GO:0003735">
    <property type="term" value="F:structural constituent of ribosome"/>
    <property type="evidence" value="ECO:0007669"/>
    <property type="project" value="InterPro"/>
</dbReference>
<dbReference type="GO" id="GO:0006412">
    <property type="term" value="P:translation"/>
    <property type="evidence" value="ECO:0007669"/>
    <property type="project" value="UniProtKB-UniRule"/>
</dbReference>
<dbReference type="CDD" id="cd00473">
    <property type="entry name" value="bS6"/>
    <property type="match status" value="1"/>
</dbReference>
<dbReference type="Gene3D" id="3.30.70.60">
    <property type="match status" value="1"/>
</dbReference>
<dbReference type="HAMAP" id="MF_00360">
    <property type="entry name" value="Ribosomal_bS6"/>
    <property type="match status" value="1"/>
</dbReference>
<dbReference type="InterPro" id="IPR000529">
    <property type="entry name" value="Ribosomal_bS6"/>
</dbReference>
<dbReference type="InterPro" id="IPR035980">
    <property type="entry name" value="Ribosomal_bS6_sf"/>
</dbReference>
<dbReference type="InterPro" id="IPR020814">
    <property type="entry name" value="Ribosomal_S6_plastid/chlpt"/>
</dbReference>
<dbReference type="InterPro" id="IPR014717">
    <property type="entry name" value="Transl_elong_EF1B/ribsomal_bS6"/>
</dbReference>
<dbReference type="NCBIfam" id="TIGR00166">
    <property type="entry name" value="S6"/>
    <property type="match status" value="1"/>
</dbReference>
<dbReference type="PANTHER" id="PTHR21011">
    <property type="entry name" value="MITOCHONDRIAL 28S RIBOSOMAL PROTEIN S6"/>
    <property type="match status" value="1"/>
</dbReference>
<dbReference type="PANTHER" id="PTHR21011:SF1">
    <property type="entry name" value="SMALL RIBOSOMAL SUBUNIT PROTEIN BS6M"/>
    <property type="match status" value="1"/>
</dbReference>
<dbReference type="Pfam" id="PF01250">
    <property type="entry name" value="Ribosomal_S6"/>
    <property type="match status" value="1"/>
</dbReference>
<dbReference type="SUPFAM" id="SSF54995">
    <property type="entry name" value="Ribosomal protein S6"/>
    <property type="match status" value="1"/>
</dbReference>
<organism>
    <name type="scientific">Onion yellows phytoplasma (strain OY-M)</name>
    <dbReference type="NCBI Taxonomy" id="262768"/>
    <lineage>
        <taxon>Bacteria</taxon>
        <taxon>Bacillati</taxon>
        <taxon>Mycoplasmatota</taxon>
        <taxon>Mollicutes</taxon>
        <taxon>Acholeplasmatales</taxon>
        <taxon>Acholeplasmataceae</taxon>
        <taxon>Candidatus Phytoplasma</taxon>
        <taxon>16SrI (Aster yellows group)</taxon>
    </lineage>
</organism>
<name>RS6_ONYPE</name>
<gene>
    <name evidence="1" type="primary">rpsF</name>
    <name type="ordered locus">PAM_009</name>
</gene>
<reference key="1">
    <citation type="journal article" date="2004" name="Nat. Genet.">
        <title>Reductive evolution suggested from the complete genome sequence of a plant-pathogenic phytoplasma.</title>
        <authorList>
            <person name="Oshima K."/>
            <person name="Kakizawa S."/>
            <person name="Nishigawa H."/>
            <person name="Jung H.-Y."/>
            <person name="Wei W."/>
            <person name="Suzuki S."/>
            <person name="Arashida R."/>
            <person name="Nakata D."/>
            <person name="Miyata S."/>
            <person name="Ugaki M."/>
            <person name="Namba S."/>
        </authorList>
    </citation>
    <scope>NUCLEOTIDE SEQUENCE [LARGE SCALE GENOMIC DNA]</scope>
    <source>
        <strain>OY-M</strain>
    </source>
</reference>
<protein>
    <recommendedName>
        <fullName evidence="1">Small ribosomal subunit protein bS6</fullName>
    </recommendedName>
    <alternativeName>
        <fullName evidence="2">30S ribosomal protein S6</fullName>
    </alternativeName>
</protein>
<keyword id="KW-0687">Ribonucleoprotein</keyword>
<keyword id="KW-0689">Ribosomal protein</keyword>
<keyword id="KW-0694">RNA-binding</keyword>
<keyword id="KW-0699">rRNA-binding</keyword>
<comment type="function">
    <text evidence="1">Binds together with bS18 to 16S ribosomal RNA.</text>
</comment>
<comment type="similarity">
    <text evidence="1">Belongs to the bacterial ribosomal protein bS6 family.</text>
</comment>
<comment type="sequence caution" evidence="2">
    <conflict type="erroneous initiation">
        <sequence resource="EMBL-CDS" id="BAD04094"/>
    </conflict>
</comment>